<organism>
    <name type="scientific">Yersinia pestis</name>
    <dbReference type="NCBI Taxonomy" id="632"/>
    <lineage>
        <taxon>Bacteria</taxon>
        <taxon>Pseudomonadati</taxon>
        <taxon>Pseudomonadota</taxon>
        <taxon>Gammaproteobacteria</taxon>
        <taxon>Enterobacterales</taxon>
        <taxon>Yersiniaceae</taxon>
        <taxon>Yersinia</taxon>
    </lineage>
</organism>
<protein>
    <recommendedName>
        <fullName>UPF0299 membrane protein YPO1514/y2654/YP_1404</fullName>
    </recommendedName>
</protein>
<feature type="chain" id="PRO_0000072818" description="UPF0299 membrane protein YPO1514/y2654/YP_1404">
    <location>
        <begin position="1"/>
        <end position="135"/>
    </location>
</feature>
<feature type="transmembrane region" description="Helical" evidence="2">
    <location>
        <begin position="4"/>
        <end position="24"/>
    </location>
</feature>
<feature type="transmembrane region" description="Helical" evidence="2">
    <location>
        <begin position="30"/>
        <end position="50"/>
    </location>
</feature>
<feature type="transmembrane region" description="Helical" evidence="2">
    <location>
        <begin position="66"/>
        <end position="86"/>
    </location>
</feature>
<feature type="transmembrane region" description="Helical" evidence="2">
    <location>
        <begin position="93"/>
        <end position="113"/>
    </location>
</feature>
<proteinExistence type="inferred from homology"/>
<name>Y1514_YERPE</name>
<gene>
    <name type="ordered locus">YPO1514</name>
    <name type="ordered locus">y2654</name>
    <name type="ordered locus">YP_1404</name>
</gene>
<evidence type="ECO:0000250" key="1"/>
<evidence type="ECO:0000255" key="2"/>
<evidence type="ECO:0000305" key="3"/>
<sequence>MRNMMSLCWQYLRAFTIIYLCLWAGKALALLLPIVIPGSIIGMLILFVLLTLQILPSPWVKPSCQLLIRYMALLFVPIGVGVMQYYEQLTKQFGPIVVSCFISTLIVMLVVAYSSHYVHRDRKVISPSTPTEGEK</sequence>
<reference key="1">
    <citation type="journal article" date="2001" name="Nature">
        <title>Genome sequence of Yersinia pestis, the causative agent of plague.</title>
        <authorList>
            <person name="Parkhill J."/>
            <person name="Wren B.W."/>
            <person name="Thomson N.R."/>
            <person name="Titball R.W."/>
            <person name="Holden M.T.G."/>
            <person name="Prentice M.B."/>
            <person name="Sebaihia M."/>
            <person name="James K.D."/>
            <person name="Churcher C.M."/>
            <person name="Mungall K.L."/>
            <person name="Baker S."/>
            <person name="Basham D."/>
            <person name="Bentley S.D."/>
            <person name="Brooks K."/>
            <person name="Cerdeno-Tarraga A.-M."/>
            <person name="Chillingworth T."/>
            <person name="Cronin A."/>
            <person name="Davies R.M."/>
            <person name="Davis P."/>
            <person name="Dougan G."/>
            <person name="Feltwell T."/>
            <person name="Hamlin N."/>
            <person name="Holroyd S."/>
            <person name="Jagels K."/>
            <person name="Karlyshev A.V."/>
            <person name="Leather S."/>
            <person name="Moule S."/>
            <person name="Oyston P.C.F."/>
            <person name="Quail M.A."/>
            <person name="Rutherford K.M."/>
            <person name="Simmonds M."/>
            <person name="Skelton J."/>
            <person name="Stevens K."/>
            <person name="Whitehead S."/>
            <person name="Barrell B.G."/>
        </authorList>
    </citation>
    <scope>NUCLEOTIDE SEQUENCE [LARGE SCALE GENOMIC DNA]</scope>
    <source>
        <strain>CO-92 / Biovar Orientalis</strain>
    </source>
</reference>
<reference key="2">
    <citation type="journal article" date="2002" name="J. Bacteriol.">
        <title>Genome sequence of Yersinia pestis KIM.</title>
        <authorList>
            <person name="Deng W."/>
            <person name="Burland V."/>
            <person name="Plunkett G. III"/>
            <person name="Boutin A."/>
            <person name="Mayhew G.F."/>
            <person name="Liss P."/>
            <person name="Perna N.T."/>
            <person name="Rose D.J."/>
            <person name="Mau B."/>
            <person name="Zhou S."/>
            <person name="Schwartz D.C."/>
            <person name="Fetherston J.D."/>
            <person name="Lindler L.E."/>
            <person name="Brubaker R.R."/>
            <person name="Plano G.V."/>
            <person name="Straley S.C."/>
            <person name="McDonough K.A."/>
            <person name="Nilles M.L."/>
            <person name="Matson J.S."/>
            <person name="Blattner F.R."/>
            <person name="Perry R.D."/>
        </authorList>
    </citation>
    <scope>NUCLEOTIDE SEQUENCE [LARGE SCALE GENOMIC DNA]</scope>
    <source>
        <strain>KIM10+ / Biovar Mediaevalis</strain>
    </source>
</reference>
<reference key="3">
    <citation type="journal article" date="2004" name="DNA Res.">
        <title>Complete genome sequence of Yersinia pestis strain 91001, an isolate avirulent to humans.</title>
        <authorList>
            <person name="Song Y."/>
            <person name="Tong Z."/>
            <person name="Wang J."/>
            <person name="Wang L."/>
            <person name="Guo Z."/>
            <person name="Han Y."/>
            <person name="Zhang J."/>
            <person name="Pei D."/>
            <person name="Zhou D."/>
            <person name="Qin H."/>
            <person name="Pang X."/>
            <person name="Han Y."/>
            <person name="Zhai J."/>
            <person name="Li M."/>
            <person name="Cui B."/>
            <person name="Qi Z."/>
            <person name="Jin L."/>
            <person name="Dai R."/>
            <person name="Chen F."/>
            <person name="Li S."/>
            <person name="Ye C."/>
            <person name="Du Z."/>
            <person name="Lin W."/>
            <person name="Wang J."/>
            <person name="Yu J."/>
            <person name="Yang H."/>
            <person name="Wang J."/>
            <person name="Huang P."/>
            <person name="Yang R."/>
        </authorList>
    </citation>
    <scope>NUCLEOTIDE SEQUENCE [LARGE SCALE GENOMIC DNA]</scope>
    <source>
        <strain>91001 / Biovar Mediaevalis</strain>
    </source>
</reference>
<dbReference type="EMBL" id="AL590842">
    <property type="protein sequence ID" value="CAL20160.1"/>
    <property type="molecule type" value="Genomic_DNA"/>
</dbReference>
<dbReference type="EMBL" id="AE009952">
    <property type="protein sequence ID" value="AAM86207.1"/>
    <property type="status" value="ALT_INIT"/>
    <property type="molecule type" value="Genomic_DNA"/>
</dbReference>
<dbReference type="EMBL" id="AE017042">
    <property type="protein sequence ID" value="AAS61645.1"/>
    <property type="status" value="ALT_INIT"/>
    <property type="molecule type" value="Genomic_DNA"/>
</dbReference>
<dbReference type="PIR" id="AF0184">
    <property type="entry name" value="AF0184"/>
</dbReference>
<dbReference type="RefSeq" id="WP_002211971.1">
    <property type="nucleotide sequence ID" value="NZ_WUCM01000063.1"/>
</dbReference>
<dbReference type="RefSeq" id="YP_002346530.1">
    <property type="nucleotide sequence ID" value="NC_003143.1"/>
</dbReference>
<dbReference type="SMR" id="Q8D074"/>
<dbReference type="STRING" id="214092.YPO1514"/>
<dbReference type="PaxDb" id="214092-YPO1514"/>
<dbReference type="DNASU" id="1147601"/>
<dbReference type="EnsemblBacteria" id="AAS61645">
    <property type="protein sequence ID" value="AAS61645"/>
    <property type="gene ID" value="YP_1404"/>
</dbReference>
<dbReference type="KEGG" id="ype:YPO1514"/>
<dbReference type="KEGG" id="ypk:y2654"/>
<dbReference type="KEGG" id="ypm:YP_1404"/>
<dbReference type="PATRIC" id="fig|214092.21.peg.1847"/>
<dbReference type="eggNOG" id="COG1380">
    <property type="taxonomic scope" value="Bacteria"/>
</dbReference>
<dbReference type="HOGENOM" id="CLU_113736_1_1_6"/>
<dbReference type="OMA" id="AIAADFW"/>
<dbReference type="OrthoDB" id="385012at2"/>
<dbReference type="Proteomes" id="UP000000815">
    <property type="component" value="Chromosome"/>
</dbReference>
<dbReference type="Proteomes" id="UP000001019">
    <property type="component" value="Chromosome"/>
</dbReference>
<dbReference type="Proteomes" id="UP000002490">
    <property type="component" value="Chromosome"/>
</dbReference>
<dbReference type="GO" id="GO:0005886">
    <property type="term" value="C:plasma membrane"/>
    <property type="evidence" value="ECO:0007669"/>
    <property type="project" value="UniProtKB-SubCell"/>
</dbReference>
<dbReference type="HAMAP" id="MF_01144">
    <property type="entry name" value="UPF0299"/>
    <property type="match status" value="1"/>
</dbReference>
<dbReference type="InterPro" id="IPR005538">
    <property type="entry name" value="LrgA/CidA"/>
</dbReference>
<dbReference type="InterPro" id="IPR022957">
    <property type="entry name" value="Uncharacterised_UPF0299"/>
</dbReference>
<dbReference type="NCBIfam" id="NF002494">
    <property type="entry name" value="PRK01821.1"/>
    <property type="match status" value="1"/>
</dbReference>
<dbReference type="PANTHER" id="PTHR33931">
    <property type="entry name" value="HOLIN-LIKE PROTEIN CIDA-RELATED"/>
    <property type="match status" value="1"/>
</dbReference>
<dbReference type="PANTHER" id="PTHR33931:SF5">
    <property type="entry name" value="UPF0299 MEMBRANE PROTEIN YOHJ"/>
    <property type="match status" value="1"/>
</dbReference>
<dbReference type="Pfam" id="PF03788">
    <property type="entry name" value="LrgA"/>
    <property type="match status" value="1"/>
</dbReference>
<keyword id="KW-0997">Cell inner membrane</keyword>
<keyword id="KW-1003">Cell membrane</keyword>
<keyword id="KW-0472">Membrane</keyword>
<keyword id="KW-1185">Reference proteome</keyword>
<keyword id="KW-0812">Transmembrane</keyword>
<keyword id="KW-1133">Transmembrane helix</keyword>
<accession>Q8D074</accession>
<accession>Q0WGQ8</accession>
<accession>Q8ZG06</accession>
<comment type="subcellular location">
    <subcellularLocation>
        <location evidence="1">Cell inner membrane</location>
        <topology evidence="1">Multi-pass membrane protein</topology>
    </subcellularLocation>
</comment>
<comment type="similarity">
    <text evidence="3">Belongs to the UPF0299 family.</text>
</comment>
<comment type="sequence caution" evidence="3">
    <conflict type="erroneous initiation">
        <sequence resource="EMBL-CDS" id="AAM86207"/>
    </conflict>
</comment>
<comment type="sequence caution" evidence="3">
    <conflict type="erroneous initiation">
        <sequence resource="EMBL-CDS" id="AAS61645"/>
    </conflict>
</comment>